<proteinExistence type="inferred from homology"/>
<evidence type="ECO:0000250" key="1"/>
<evidence type="ECO:0000255" key="2">
    <source>
        <dbReference type="HAMAP-Rule" id="MF_00047"/>
    </source>
</evidence>
<organism>
    <name type="scientific">Haemophilus ducreyi (strain 35000HP / ATCC 700724)</name>
    <dbReference type="NCBI Taxonomy" id="233412"/>
    <lineage>
        <taxon>Bacteria</taxon>
        <taxon>Pseudomonadati</taxon>
        <taxon>Pseudomonadota</taxon>
        <taxon>Gammaproteobacteria</taxon>
        <taxon>Pasteurellales</taxon>
        <taxon>Pasteurellaceae</taxon>
        <taxon>Haemophilus</taxon>
    </lineage>
</organism>
<protein>
    <recommendedName>
        <fullName evidence="2">D-alanine--D-alanine ligase</fullName>
        <ecNumber evidence="2">6.3.2.4</ecNumber>
    </recommendedName>
    <alternativeName>
        <fullName evidence="2">D-Ala-D-Ala ligase</fullName>
    </alternativeName>
    <alternativeName>
        <fullName evidence="2">D-alanylalanine synthetase</fullName>
    </alternativeName>
</protein>
<reference key="1">
    <citation type="submission" date="2003-06" db="EMBL/GenBank/DDBJ databases">
        <title>The complete genome sequence of Haemophilus ducreyi.</title>
        <authorList>
            <person name="Munson R.S. Jr."/>
            <person name="Ray W.C."/>
            <person name="Mahairas G."/>
            <person name="Sabo P."/>
            <person name="Mungur R."/>
            <person name="Johnson L."/>
            <person name="Nguyen D."/>
            <person name="Wang J."/>
            <person name="Forst C."/>
            <person name="Hood L."/>
        </authorList>
    </citation>
    <scope>NUCLEOTIDE SEQUENCE [LARGE SCALE GENOMIC DNA]</scope>
    <source>
        <strain>35000HP / ATCC 700724</strain>
    </source>
</reference>
<keyword id="KW-0067">ATP-binding</keyword>
<keyword id="KW-0133">Cell shape</keyword>
<keyword id="KW-0961">Cell wall biogenesis/degradation</keyword>
<keyword id="KW-0963">Cytoplasm</keyword>
<keyword id="KW-0436">Ligase</keyword>
<keyword id="KW-0460">Magnesium</keyword>
<keyword id="KW-0464">Manganese</keyword>
<keyword id="KW-0479">Metal-binding</keyword>
<keyword id="KW-0547">Nucleotide-binding</keyword>
<keyword id="KW-0573">Peptidoglycan synthesis</keyword>
<keyword id="KW-1185">Reference proteome</keyword>
<comment type="function">
    <text evidence="2">Cell wall formation.</text>
</comment>
<comment type="catalytic activity">
    <reaction evidence="2">
        <text>2 D-alanine + ATP = D-alanyl-D-alanine + ADP + phosphate + H(+)</text>
        <dbReference type="Rhea" id="RHEA:11224"/>
        <dbReference type="ChEBI" id="CHEBI:15378"/>
        <dbReference type="ChEBI" id="CHEBI:30616"/>
        <dbReference type="ChEBI" id="CHEBI:43474"/>
        <dbReference type="ChEBI" id="CHEBI:57416"/>
        <dbReference type="ChEBI" id="CHEBI:57822"/>
        <dbReference type="ChEBI" id="CHEBI:456216"/>
        <dbReference type="EC" id="6.3.2.4"/>
    </reaction>
</comment>
<comment type="cofactor">
    <cofactor evidence="1">
        <name>Mg(2+)</name>
        <dbReference type="ChEBI" id="CHEBI:18420"/>
    </cofactor>
    <cofactor evidence="1">
        <name>Mn(2+)</name>
        <dbReference type="ChEBI" id="CHEBI:29035"/>
    </cofactor>
    <text evidence="1">Binds 2 magnesium or manganese ions per subunit.</text>
</comment>
<comment type="pathway">
    <text evidence="2">Cell wall biogenesis; peptidoglycan biosynthesis.</text>
</comment>
<comment type="subcellular location">
    <subcellularLocation>
        <location evidence="2">Cytoplasm</location>
    </subcellularLocation>
</comment>
<comment type="similarity">
    <text evidence="2">Belongs to the D-alanine--D-alanine ligase family.</text>
</comment>
<accession>Q7VMY2</accession>
<name>DDL_HAEDU</name>
<feature type="chain" id="PRO_0000177826" description="D-alanine--D-alanine ligase">
    <location>
        <begin position="1"/>
        <end position="303"/>
    </location>
</feature>
<feature type="domain" description="ATP-grasp" evidence="2">
    <location>
        <begin position="104"/>
        <end position="300"/>
    </location>
</feature>
<feature type="binding site" evidence="2">
    <location>
        <begin position="132"/>
        <end position="187"/>
    </location>
    <ligand>
        <name>ATP</name>
        <dbReference type="ChEBI" id="CHEBI:30616"/>
    </ligand>
</feature>
<feature type="binding site" evidence="2">
    <location>
        <position position="254"/>
    </location>
    <ligand>
        <name>Mg(2+)</name>
        <dbReference type="ChEBI" id="CHEBI:18420"/>
        <label>1</label>
    </ligand>
</feature>
<feature type="binding site" evidence="2">
    <location>
        <position position="267"/>
    </location>
    <ligand>
        <name>Mg(2+)</name>
        <dbReference type="ChEBI" id="CHEBI:18420"/>
        <label>1</label>
    </ligand>
</feature>
<feature type="binding site" evidence="2">
    <location>
        <position position="267"/>
    </location>
    <ligand>
        <name>Mg(2+)</name>
        <dbReference type="ChEBI" id="CHEBI:18420"/>
        <label>2</label>
    </ligand>
</feature>
<feature type="binding site" evidence="2">
    <location>
        <position position="269"/>
    </location>
    <ligand>
        <name>Mg(2+)</name>
        <dbReference type="ChEBI" id="CHEBI:18420"/>
        <label>2</label>
    </ligand>
</feature>
<dbReference type="EC" id="6.3.2.4" evidence="2"/>
<dbReference type="EMBL" id="AE017143">
    <property type="protein sequence ID" value="AAP95719.1"/>
    <property type="molecule type" value="Genomic_DNA"/>
</dbReference>
<dbReference type="RefSeq" id="WP_010944769.1">
    <property type="nucleotide sequence ID" value="NC_002940.2"/>
</dbReference>
<dbReference type="SMR" id="Q7VMY2"/>
<dbReference type="STRING" id="233412.HD_0821"/>
<dbReference type="KEGG" id="hdu:HD_0821"/>
<dbReference type="eggNOG" id="COG1181">
    <property type="taxonomic scope" value="Bacteria"/>
</dbReference>
<dbReference type="HOGENOM" id="CLU_039268_1_2_6"/>
<dbReference type="OrthoDB" id="9813261at2"/>
<dbReference type="UniPathway" id="UPA00219"/>
<dbReference type="Proteomes" id="UP000001022">
    <property type="component" value="Chromosome"/>
</dbReference>
<dbReference type="GO" id="GO:0005829">
    <property type="term" value="C:cytosol"/>
    <property type="evidence" value="ECO:0007669"/>
    <property type="project" value="TreeGrafter"/>
</dbReference>
<dbReference type="GO" id="GO:0005524">
    <property type="term" value="F:ATP binding"/>
    <property type="evidence" value="ECO:0007669"/>
    <property type="project" value="UniProtKB-KW"/>
</dbReference>
<dbReference type="GO" id="GO:0008716">
    <property type="term" value="F:D-alanine-D-alanine ligase activity"/>
    <property type="evidence" value="ECO:0007669"/>
    <property type="project" value="UniProtKB-UniRule"/>
</dbReference>
<dbReference type="GO" id="GO:0046872">
    <property type="term" value="F:metal ion binding"/>
    <property type="evidence" value="ECO:0007669"/>
    <property type="project" value="UniProtKB-KW"/>
</dbReference>
<dbReference type="GO" id="GO:0071555">
    <property type="term" value="P:cell wall organization"/>
    <property type="evidence" value="ECO:0007669"/>
    <property type="project" value="UniProtKB-KW"/>
</dbReference>
<dbReference type="GO" id="GO:0009252">
    <property type="term" value="P:peptidoglycan biosynthetic process"/>
    <property type="evidence" value="ECO:0007669"/>
    <property type="project" value="UniProtKB-UniRule"/>
</dbReference>
<dbReference type="GO" id="GO:0008360">
    <property type="term" value="P:regulation of cell shape"/>
    <property type="evidence" value="ECO:0007669"/>
    <property type="project" value="UniProtKB-KW"/>
</dbReference>
<dbReference type="FunFam" id="3.30.470.20:FF:000008">
    <property type="entry name" value="D-alanine--D-alanine ligase"/>
    <property type="match status" value="1"/>
</dbReference>
<dbReference type="FunFam" id="3.40.50.20:FF:000013">
    <property type="entry name" value="D-alanine--D-alanine ligase"/>
    <property type="match status" value="1"/>
</dbReference>
<dbReference type="Gene3D" id="3.40.50.20">
    <property type="match status" value="1"/>
</dbReference>
<dbReference type="Gene3D" id="3.30.1490.20">
    <property type="entry name" value="ATP-grasp fold, A domain"/>
    <property type="match status" value="1"/>
</dbReference>
<dbReference type="Gene3D" id="3.30.470.20">
    <property type="entry name" value="ATP-grasp fold, B domain"/>
    <property type="match status" value="1"/>
</dbReference>
<dbReference type="HAMAP" id="MF_00047">
    <property type="entry name" value="Dala_Dala_lig"/>
    <property type="match status" value="1"/>
</dbReference>
<dbReference type="InterPro" id="IPR011761">
    <property type="entry name" value="ATP-grasp"/>
</dbReference>
<dbReference type="InterPro" id="IPR013815">
    <property type="entry name" value="ATP_grasp_subdomain_1"/>
</dbReference>
<dbReference type="InterPro" id="IPR000291">
    <property type="entry name" value="D-Ala_lig_Van_CS"/>
</dbReference>
<dbReference type="InterPro" id="IPR005905">
    <property type="entry name" value="D_ala_D_ala"/>
</dbReference>
<dbReference type="InterPro" id="IPR011095">
    <property type="entry name" value="Dala_Dala_lig_C"/>
</dbReference>
<dbReference type="InterPro" id="IPR011127">
    <property type="entry name" value="Dala_Dala_lig_N"/>
</dbReference>
<dbReference type="InterPro" id="IPR016185">
    <property type="entry name" value="PreATP-grasp_dom_sf"/>
</dbReference>
<dbReference type="NCBIfam" id="TIGR01205">
    <property type="entry name" value="D_ala_D_alaTIGR"/>
    <property type="match status" value="1"/>
</dbReference>
<dbReference type="NCBIfam" id="NF002378">
    <property type="entry name" value="PRK01372.1"/>
    <property type="match status" value="1"/>
</dbReference>
<dbReference type="PANTHER" id="PTHR23132">
    <property type="entry name" value="D-ALANINE--D-ALANINE LIGASE"/>
    <property type="match status" value="1"/>
</dbReference>
<dbReference type="PANTHER" id="PTHR23132:SF23">
    <property type="entry name" value="D-ALANINE--D-ALANINE LIGASE B"/>
    <property type="match status" value="1"/>
</dbReference>
<dbReference type="Pfam" id="PF07478">
    <property type="entry name" value="Dala_Dala_lig_C"/>
    <property type="match status" value="1"/>
</dbReference>
<dbReference type="Pfam" id="PF01820">
    <property type="entry name" value="Dala_Dala_lig_N"/>
    <property type="match status" value="1"/>
</dbReference>
<dbReference type="PIRSF" id="PIRSF039102">
    <property type="entry name" value="Ddl/VanB"/>
    <property type="match status" value="1"/>
</dbReference>
<dbReference type="SUPFAM" id="SSF56059">
    <property type="entry name" value="Glutathione synthetase ATP-binding domain-like"/>
    <property type="match status" value="1"/>
</dbReference>
<dbReference type="SUPFAM" id="SSF52440">
    <property type="entry name" value="PreATP-grasp domain"/>
    <property type="match status" value="1"/>
</dbReference>
<dbReference type="PROSITE" id="PS50975">
    <property type="entry name" value="ATP_GRASP"/>
    <property type="match status" value="1"/>
</dbReference>
<dbReference type="PROSITE" id="PS00843">
    <property type="entry name" value="DALA_DALA_LIGASE_1"/>
    <property type="match status" value="1"/>
</dbReference>
<dbReference type="PROSITE" id="PS00844">
    <property type="entry name" value="DALA_DALA_LIGASE_2"/>
    <property type="match status" value="1"/>
</dbReference>
<gene>
    <name evidence="2" type="primary">ddl</name>
    <name type="synonym">ddlB</name>
    <name type="ordered locus">HD_0821</name>
</gene>
<sequence>MNIKNEKIAVLYGGTSQEREVSLHSGAAVTEALKSLGYNVEGIDTKDIAIEKLKEKGIQRVFNILHGGIGENGVLQGALEQMGIPYTGCGVMASAITLDKFRTKLLWNAVGLPTADMVVVQRGQAIDINQIIAKLSLPVFVKPSSEGSSVGVFKVKTKEELLPAITAALEFDTIVLVEEFLTGAEYSVPVLDGEVLPAVQIIPDGEFYDYHAKYLSDKTQYIVPALTNERQAEVAKIVKAAYDVVGCRGWSRIDVMEDQNQNFRLVEVNTNPGMTSHSIFPKSAATMGISFEKLVERVLELSI</sequence>